<name>UFM1_CHICK</name>
<reference key="1">
    <citation type="journal article" date="2005" name="Genome Biol.">
        <title>Full-length cDNAs from chicken bursal lymphocytes to facilitate gene function analysis.</title>
        <authorList>
            <person name="Caldwell R.B."/>
            <person name="Kierzek A.M."/>
            <person name="Arakawa H."/>
            <person name="Bezzubov Y."/>
            <person name="Zaim J."/>
            <person name="Fiedler P."/>
            <person name="Kutter S."/>
            <person name="Blagodatski A."/>
            <person name="Kostovska D."/>
            <person name="Koter M."/>
            <person name="Plachy J."/>
            <person name="Carninci P."/>
            <person name="Hayashizaki Y."/>
            <person name="Buerstedde J.-M."/>
        </authorList>
    </citation>
    <scope>NUCLEOTIDE SEQUENCE [LARGE SCALE MRNA]</scope>
    <source>
        <strain>CB</strain>
        <tissue>Bursa of Fabricius</tissue>
    </source>
</reference>
<feature type="chain" id="PRO_0000042132" description="Ubiquitin-fold modifier 1">
    <location>
        <begin position="1"/>
        <end position="83"/>
    </location>
</feature>
<feature type="propeptide" id="PRO_0000042133" description="Removed in mature form" evidence="1">
    <location>
        <begin position="84"/>
        <end position="85"/>
    </location>
</feature>
<feature type="cross-link" description="Glycyl lysine isopeptide (Lys-Gly) (interchain with G-Cter in UFM1)" evidence="1">
    <location>
        <position position="69"/>
    </location>
</feature>
<feature type="cross-link" description="Glycyl lysine isopeptide (Gly-Lys) (interchain with K-? in acceptor proteins)" evidence="1">
    <location>
        <position position="83"/>
    </location>
</feature>
<organism>
    <name type="scientific">Gallus gallus</name>
    <name type="common">Chicken</name>
    <dbReference type="NCBI Taxonomy" id="9031"/>
    <lineage>
        <taxon>Eukaryota</taxon>
        <taxon>Metazoa</taxon>
        <taxon>Chordata</taxon>
        <taxon>Craniata</taxon>
        <taxon>Vertebrata</taxon>
        <taxon>Euteleostomi</taxon>
        <taxon>Archelosauria</taxon>
        <taxon>Archosauria</taxon>
        <taxon>Dinosauria</taxon>
        <taxon>Saurischia</taxon>
        <taxon>Theropoda</taxon>
        <taxon>Coelurosauria</taxon>
        <taxon>Aves</taxon>
        <taxon>Neognathae</taxon>
        <taxon>Galloanserae</taxon>
        <taxon>Galliformes</taxon>
        <taxon>Phasianidae</taxon>
        <taxon>Phasianinae</taxon>
        <taxon>Gallus</taxon>
    </lineage>
</organism>
<gene>
    <name evidence="1" type="primary">UFM1</name>
    <name evidence="2" type="ORF">RCJMB04_1l24</name>
</gene>
<evidence type="ECO:0000250" key="1">
    <source>
        <dbReference type="UniProtKB" id="P61960"/>
    </source>
</evidence>
<evidence type="ECO:0000303" key="2">
    <source>
    </source>
</evidence>
<evidence type="ECO:0000305" key="3"/>
<protein>
    <recommendedName>
        <fullName evidence="1">Ubiquitin-fold modifier 1</fullName>
    </recommendedName>
</protein>
<dbReference type="EMBL" id="AJ719377">
    <property type="protein sequence ID" value="CAG31036.1"/>
    <property type="molecule type" value="mRNA"/>
</dbReference>
<dbReference type="RefSeq" id="NP_001025998.1">
    <property type="nucleotide sequence ID" value="NM_001030827.2"/>
</dbReference>
<dbReference type="SMR" id="Q5ZMK7"/>
<dbReference type="FunCoup" id="Q5ZMK7">
    <property type="interactions" value="1702"/>
</dbReference>
<dbReference type="STRING" id="9031.ENSGALP00000043924"/>
<dbReference type="PaxDb" id="9031-ENSGALP00000027483"/>
<dbReference type="GeneID" id="418894"/>
<dbReference type="KEGG" id="gga:418894"/>
<dbReference type="CTD" id="51569"/>
<dbReference type="VEuPathDB" id="HostDB:geneid_418894"/>
<dbReference type="eggNOG" id="KOG3483">
    <property type="taxonomic scope" value="Eukaryota"/>
</dbReference>
<dbReference type="HOGENOM" id="CLU_175114_0_0_1"/>
<dbReference type="InParanoid" id="Q5ZMK7"/>
<dbReference type="OMA" id="MEHAVGK"/>
<dbReference type="OrthoDB" id="284357at2759"/>
<dbReference type="PhylomeDB" id="Q5ZMK7"/>
<dbReference type="TreeFam" id="TF312934"/>
<dbReference type="PRO" id="PR:Q5ZMK7"/>
<dbReference type="Proteomes" id="UP000000539">
    <property type="component" value="Chromosome 1"/>
</dbReference>
<dbReference type="Bgee" id="ENSGALG00000017042">
    <property type="expression patterns" value="Expressed in colon and 14 other cell types or tissues"/>
</dbReference>
<dbReference type="GO" id="GO:0005737">
    <property type="term" value="C:cytoplasm"/>
    <property type="evidence" value="ECO:0000250"/>
    <property type="project" value="UniProtKB"/>
</dbReference>
<dbReference type="GO" id="GO:0005634">
    <property type="term" value="C:nucleus"/>
    <property type="evidence" value="ECO:0000250"/>
    <property type="project" value="UniProtKB"/>
</dbReference>
<dbReference type="GO" id="GO:1990592">
    <property type="term" value="P:protein K69-linked ufmylation"/>
    <property type="evidence" value="ECO:0000250"/>
    <property type="project" value="UniProtKB"/>
</dbReference>
<dbReference type="GO" id="GO:0071569">
    <property type="term" value="P:protein ufmylation"/>
    <property type="evidence" value="ECO:0000250"/>
    <property type="project" value="UniProtKB"/>
</dbReference>
<dbReference type="GO" id="GO:0034976">
    <property type="term" value="P:response to endoplasmic reticulum stress"/>
    <property type="evidence" value="ECO:0000250"/>
    <property type="project" value="UniProtKB"/>
</dbReference>
<dbReference type="GO" id="GO:0061709">
    <property type="term" value="P:reticulophagy"/>
    <property type="evidence" value="ECO:0000250"/>
    <property type="project" value="UniProtKB"/>
</dbReference>
<dbReference type="CDD" id="cd01766">
    <property type="entry name" value="Ubl_UFM1"/>
    <property type="match status" value="1"/>
</dbReference>
<dbReference type="FunFam" id="3.10.20.90:FF:000044">
    <property type="entry name" value="Ubiquitin-fold modifier 1"/>
    <property type="match status" value="1"/>
</dbReference>
<dbReference type="Gene3D" id="3.10.20.90">
    <property type="entry name" value="Phosphatidylinositol 3-kinase Catalytic Subunit, Chain A, domain 1"/>
    <property type="match status" value="1"/>
</dbReference>
<dbReference type="InterPro" id="IPR029071">
    <property type="entry name" value="Ubiquitin-like_domsf"/>
</dbReference>
<dbReference type="InterPro" id="IPR005375">
    <property type="entry name" value="UFM1"/>
</dbReference>
<dbReference type="PANTHER" id="PTHR15825">
    <property type="entry name" value="UBIQUITIN-FOLD MODIFIER 1"/>
    <property type="match status" value="1"/>
</dbReference>
<dbReference type="PANTHER" id="PTHR15825:SF0">
    <property type="entry name" value="UBIQUITIN-FOLD MODIFIER 1"/>
    <property type="match status" value="1"/>
</dbReference>
<dbReference type="Pfam" id="PF03671">
    <property type="entry name" value="Ufm1"/>
    <property type="match status" value="1"/>
</dbReference>
<dbReference type="PIRSF" id="PIRSF038027">
    <property type="entry name" value="Ubiquitin-like_Ufm1"/>
    <property type="match status" value="1"/>
</dbReference>
<dbReference type="SUPFAM" id="SSF54236">
    <property type="entry name" value="Ubiquitin-like"/>
    <property type="match status" value="1"/>
</dbReference>
<sequence>MSKVTFKVTLTSDPRLPYKVLSVPESTPFTAVLKFAAEEFKVPAATSAIITNDGIGINPAQTAGNVFLKHGSDLRIIPRDRVGSS</sequence>
<comment type="function">
    <text evidence="1">Ubiquitin-like modifier which can be covalently attached via an isopeptide bond to lysine residues of substrate proteins as a monomer or a lysine-linked polymer. The so-called ufmylation, requires the UFM1-activating E1 enzyme UBA5, the UFM1-conjugating E2 enzyme UFC1, and the UFM1-ligase E3 enzyme UFL1. Ufmylation is involved in various processes, such as ribosome recycling, response to DNA damage, transcription or reticulophagy (also called ER-phagy) induced in response to endoplasmic reticulum stress.</text>
</comment>
<comment type="subunit">
    <text evidence="1">Interacts with UBA5. Interacts with UFC1.</text>
</comment>
<comment type="subcellular location">
    <subcellularLocation>
        <location evidence="1">Nucleus</location>
    </subcellularLocation>
    <subcellularLocation>
        <location evidence="1">Cytoplasm</location>
    </subcellularLocation>
</comment>
<comment type="PTM">
    <text evidence="1">UFM1 precursor is cleaved by UFSP1, promoting its maturation: processing of the C-terminal Ser-Cys dipeptide is required to expose its C-terminal conserved Gly residue.</text>
</comment>
<comment type="similarity">
    <text evidence="3">Belongs to the UFM1 family.</text>
</comment>
<accession>Q5ZMK7</accession>
<proteinExistence type="inferred from homology"/>
<keyword id="KW-0963">Cytoplasm</keyword>
<keyword id="KW-1017">Isopeptide bond</keyword>
<keyword id="KW-0539">Nucleus</keyword>
<keyword id="KW-1185">Reference proteome</keyword>
<keyword id="KW-0832">Ubl conjugation</keyword>
<keyword id="KW-0833">Ubl conjugation pathway</keyword>